<feature type="chain" id="PRO_0000213776" description="Putative sarcosine oxidase">
    <location>
        <begin position="1"/>
        <end position="384"/>
    </location>
</feature>
<feature type="binding site" evidence="2">
    <location>
        <begin position="6"/>
        <end position="36"/>
    </location>
    <ligand>
        <name>FAD</name>
        <dbReference type="ChEBI" id="CHEBI:57692"/>
    </ligand>
</feature>
<feature type="modified residue" description="S-8alpha-FAD cysteine" evidence="3">
    <location>
        <position position="315"/>
    </location>
</feature>
<evidence type="ECO:0000250" key="1"/>
<evidence type="ECO:0000255" key="2"/>
<evidence type="ECO:0000305" key="3"/>
<sequence>MSTDYDVVVVGAGIFGSCTAYNCQKIGLKTLLLEQFELGHKNGSSHGKSRITRYAHTEVEYVDLVGDAYNQIFELERIRGEKLWKKTGLLWVSTGNEVEKIHTNLKLKGIKHEVIKGTEVGKRYPQFKFDDSWNGLIDPMGGVIYADKWLNAFRDEFKKIGGIIHDREIVLSHSEISNNLFVTTNKSRYSSKKIIFTVGCWITKFLPDLKFNIEPISISVCYWKTKNESDSHLLNEDHYPVVIAQEMDLQVFHYSLPDTDYPGSMKFCYHFGDALTQDLAHPAQRSQRCIDLPAKFIQKYMPVVDGSAPTRIDKCIYTNSPDDHYIIGTIPTKNPNILVGGCGSGSGFKVAPGIGKALAEMAAGKKTTVDVSFFSANRFKPSKI</sequence>
<organism>
    <name type="scientific">Caenorhabditis elegans</name>
    <dbReference type="NCBI Taxonomy" id="6239"/>
    <lineage>
        <taxon>Eukaryota</taxon>
        <taxon>Metazoa</taxon>
        <taxon>Ecdysozoa</taxon>
        <taxon>Nematoda</taxon>
        <taxon>Chromadorea</taxon>
        <taxon>Rhabditida</taxon>
        <taxon>Rhabditina</taxon>
        <taxon>Rhabditomorpha</taxon>
        <taxon>Rhabditoidea</taxon>
        <taxon>Rhabditidae</taxon>
        <taxon>Peloderinae</taxon>
        <taxon>Caenorhabditis</taxon>
    </lineage>
</organism>
<reference key="1">
    <citation type="journal article" date="1998" name="Science">
        <title>Genome sequence of the nematode C. elegans: a platform for investigating biology.</title>
        <authorList>
            <consortium name="The C. elegans sequencing consortium"/>
        </authorList>
    </citation>
    <scope>NUCLEOTIDE SEQUENCE [LARGE SCALE GENOMIC DNA]</scope>
    <source>
        <strain>Bristol N2</strain>
    </source>
</reference>
<dbReference type="EC" id="1.5.3.1"/>
<dbReference type="EMBL" id="FO080547">
    <property type="protein sequence ID" value="CCD64563.1"/>
    <property type="molecule type" value="Genomic_DNA"/>
</dbReference>
<dbReference type="RefSeq" id="NP_509092.2">
    <property type="nucleotide sequence ID" value="NM_076691.4"/>
</dbReference>
<dbReference type="SMR" id="Q18006"/>
<dbReference type="FunCoup" id="Q18006">
    <property type="interactions" value="425"/>
</dbReference>
<dbReference type="STRING" id="6239.C15B12.1.1"/>
<dbReference type="PaxDb" id="6239-C15B12.1"/>
<dbReference type="PeptideAtlas" id="Q18006"/>
<dbReference type="EnsemblMetazoa" id="C15B12.1.1">
    <property type="protein sequence ID" value="C15B12.1.1"/>
    <property type="gene ID" value="WBGene00015783"/>
</dbReference>
<dbReference type="GeneID" id="180921"/>
<dbReference type="KEGG" id="cel:CELE_C15B12.1"/>
<dbReference type="UCSC" id="C15B12.1">
    <property type="organism name" value="c. elegans"/>
</dbReference>
<dbReference type="AGR" id="WB:WBGene00015783"/>
<dbReference type="CTD" id="180921"/>
<dbReference type="WormBase" id="C15B12.1">
    <property type="protein sequence ID" value="CE29665"/>
    <property type="gene ID" value="WBGene00015783"/>
</dbReference>
<dbReference type="eggNOG" id="KOG2820">
    <property type="taxonomic scope" value="Eukaryota"/>
</dbReference>
<dbReference type="GeneTree" id="ENSGT00390000011000"/>
<dbReference type="HOGENOM" id="CLU_007884_2_2_1"/>
<dbReference type="InParanoid" id="Q18006"/>
<dbReference type="OMA" id="FPSMWFQ"/>
<dbReference type="OrthoDB" id="424974at2759"/>
<dbReference type="PhylomeDB" id="Q18006"/>
<dbReference type="Reactome" id="R-CEL-71064">
    <property type="pathway name" value="Lysine catabolism"/>
</dbReference>
<dbReference type="Reactome" id="R-CEL-9033241">
    <property type="pathway name" value="Peroxisomal protein import"/>
</dbReference>
<dbReference type="PRO" id="PR:Q18006"/>
<dbReference type="Proteomes" id="UP000001940">
    <property type="component" value="Chromosome X"/>
</dbReference>
<dbReference type="Bgee" id="WBGene00015783">
    <property type="expression patterns" value="Expressed in material anatomical entity and 3 other cell types or tissues"/>
</dbReference>
<dbReference type="GO" id="GO:0005777">
    <property type="term" value="C:peroxisome"/>
    <property type="evidence" value="ECO:0000250"/>
    <property type="project" value="UniProtKB"/>
</dbReference>
<dbReference type="GO" id="GO:0050660">
    <property type="term" value="F:flavin adenine dinucleotide binding"/>
    <property type="evidence" value="ECO:0007669"/>
    <property type="project" value="InterPro"/>
</dbReference>
<dbReference type="GO" id="GO:0050031">
    <property type="term" value="F:L-pipecolate oxidase activity"/>
    <property type="evidence" value="ECO:0000250"/>
    <property type="project" value="UniProtKB"/>
</dbReference>
<dbReference type="GO" id="GO:0008115">
    <property type="term" value="F:sarcosine oxidase activity"/>
    <property type="evidence" value="ECO:0000250"/>
    <property type="project" value="UniProtKB"/>
</dbReference>
<dbReference type="GO" id="GO:0033514">
    <property type="term" value="P:L-lysine catabolic process to acetyl-CoA via L-pipecolate"/>
    <property type="evidence" value="ECO:0000250"/>
    <property type="project" value="UniProtKB"/>
</dbReference>
<dbReference type="FunFam" id="3.50.50.60:FF:000189">
    <property type="entry name" value="Monomeric sarcosine oxidase"/>
    <property type="match status" value="1"/>
</dbReference>
<dbReference type="Gene3D" id="3.30.9.10">
    <property type="entry name" value="D-Amino Acid Oxidase, subunit A, domain 2"/>
    <property type="match status" value="1"/>
</dbReference>
<dbReference type="Gene3D" id="3.50.50.60">
    <property type="entry name" value="FAD/NAD(P)-binding domain"/>
    <property type="match status" value="1"/>
</dbReference>
<dbReference type="InterPro" id="IPR006076">
    <property type="entry name" value="FAD-dep_OxRdtase"/>
</dbReference>
<dbReference type="InterPro" id="IPR036188">
    <property type="entry name" value="FAD/NAD-bd_sf"/>
</dbReference>
<dbReference type="InterPro" id="IPR045170">
    <property type="entry name" value="MTOX"/>
</dbReference>
<dbReference type="PANTHER" id="PTHR10961">
    <property type="entry name" value="PEROXISOMAL SARCOSINE OXIDASE"/>
    <property type="match status" value="1"/>
</dbReference>
<dbReference type="PANTHER" id="PTHR10961:SF46">
    <property type="entry name" value="PEROXISOMAL SARCOSINE OXIDASE"/>
    <property type="match status" value="1"/>
</dbReference>
<dbReference type="Pfam" id="PF01266">
    <property type="entry name" value="DAO"/>
    <property type="match status" value="1"/>
</dbReference>
<dbReference type="SUPFAM" id="SSF54373">
    <property type="entry name" value="FAD-linked reductases, C-terminal domain"/>
    <property type="match status" value="1"/>
</dbReference>
<dbReference type="SUPFAM" id="SSF51905">
    <property type="entry name" value="FAD/NAD(P)-binding domain"/>
    <property type="match status" value="1"/>
</dbReference>
<protein>
    <recommendedName>
        <fullName>Putative sarcosine oxidase</fullName>
        <ecNumber>1.5.3.1</ecNumber>
    </recommendedName>
</protein>
<proteinExistence type="inferred from homology"/>
<comment type="catalytic activity">
    <reaction>
        <text>sarcosine + O2 + H2O = formaldehyde + glycine + H2O2</text>
        <dbReference type="Rhea" id="RHEA:13313"/>
        <dbReference type="ChEBI" id="CHEBI:15377"/>
        <dbReference type="ChEBI" id="CHEBI:15379"/>
        <dbReference type="ChEBI" id="CHEBI:16240"/>
        <dbReference type="ChEBI" id="CHEBI:16842"/>
        <dbReference type="ChEBI" id="CHEBI:57305"/>
        <dbReference type="ChEBI" id="CHEBI:57433"/>
        <dbReference type="EC" id="1.5.3.1"/>
    </reaction>
</comment>
<comment type="cofactor">
    <cofactor evidence="1">
        <name>FAD</name>
        <dbReference type="ChEBI" id="CHEBI:57692"/>
    </cofactor>
    <text evidence="1">Binds 1 FAD per subunit.</text>
</comment>
<comment type="similarity">
    <text evidence="3">Belongs to the MSOX/MTOX family.</text>
</comment>
<keyword id="KW-0274">FAD</keyword>
<keyword id="KW-0285">Flavoprotein</keyword>
<keyword id="KW-0560">Oxidoreductase</keyword>
<keyword id="KW-1185">Reference proteome</keyword>
<accession>Q18006</accession>
<gene>
    <name type="ORF">C15B12.1</name>
</gene>
<name>SOX_CAEEL</name>